<accession>P51253</accession>
<name>RR20_PORPU</name>
<reference key="1">
    <citation type="journal article" date="1995" name="Plant Mol. Biol. Rep.">
        <title>Complete nucleotide sequence of the Porphyra purpurea chloroplast genome.</title>
        <authorList>
            <person name="Reith M.E."/>
            <person name="Munholland J."/>
        </authorList>
    </citation>
    <scope>NUCLEOTIDE SEQUENCE [LARGE SCALE GENOMIC DNA]</scope>
    <source>
        <strain>Avonport</strain>
    </source>
</reference>
<geneLocation type="chloroplast"/>
<feature type="chain" id="PRO_0000168075" description="Small ribosomal subunit protein bS20c">
    <location>
        <begin position="1"/>
        <end position="94"/>
    </location>
</feature>
<protein>
    <recommendedName>
        <fullName evidence="1">Small ribosomal subunit protein bS20c</fullName>
    </recommendedName>
    <alternativeName>
        <fullName evidence="2">30S ribosomal protein S20, chloroplastic</fullName>
    </alternativeName>
</protein>
<keyword id="KW-0150">Chloroplast</keyword>
<keyword id="KW-0934">Plastid</keyword>
<keyword id="KW-0687">Ribonucleoprotein</keyword>
<keyword id="KW-0689">Ribosomal protein</keyword>
<keyword id="KW-0694">RNA-binding</keyword>
<keyword id="KW-0699">rRNA-binding</keyword>
<comment type="function">
    <text evidence="1">Binds directly to 16S ribosomal RNA.</text>
</comment>
<comment type="subcellular location">
    <subcellularLocation>
        <location>Plastid</location>
        <location>Chloroplast</location>
    </subcellularLocation>
</comment>
<comment type="similarity">
    <text evidence="1">Belongs to the bacterial ribosomal protein bS20 family.</text>
</comment>
<dbReference type="EMBL" id="U38804">
    <property type="protein sequence ID" value="AAC08139.1"/>
    <property type="molecule type" value="Genomic_DNA"/>
</dbReference>
<dbReference type="PIR" id="S73174">
    <property type="entry name" value="S73174"/>
</dbReference>
<dbReference type="RefSeq" id="NP_053863.1">
    <property type="nucleotide sequence ID" value="NC_000925.1"/>
</dbReference>
<dbReference type="SMR" id="P51253"/>
<dbReference type="GeneID" id="809882"/>
<dbReference type="GO" id="GO:0009507">
    <property type="term" value="C:chloroplast"/>
    <property type="evidence" value="ECO:0007669"/>
    <property type="project" value="UniProtKB-SubCell"/>
</dbReference>
<dbReference type="GO" id="GO:0015935">
    <property type="term" value="C:small ribosomal subunit"/>
    <property type="evidence" value="ECO:0007669"/>
    <property type="project" value="TreeGrafter"/>
</dbReference>
<dbReference type="GO" id="GO:0070181">
    <property type="term" value="F:small ribosomal subunit rRNA binding"/>
    <property type="evidence" value="ECO:0007669"/>
    <property type="project" value="TreeGrafter"/>
</dbReference>
<dbReference type="GO" id="GO:0003735">
    <property type="term" value="F:structural constituent of ribosome"/>
    <property type="evidence" value="ECO:0007669"/>
    <property type="project" value="InterPro"/>
</dbReference>
<dbReference type="GO" id="GO:0006412">
    <property type="term" value="P:translation"/>
    <property type="evidence" value="ECO:0007669"/>
    <property type="project" value="UniProtKB-UniRule"/>
</dbReference>
<dbReference type="Gene3D" id="1.20.58.110">
    <property type="entry name" value="Ribosomal protein S20"/>
    <property type="match status" value="1"/>
</dbReference>
<dbReference type="HAMAP" id="MF_00500">
    <property type="entry name" value="Ribosomal_bS20"/>
    <property type="match status" value="1"/>
</dbReference>
<dbReference type="InterPro" id="IPR002583">
    <property type="entry name" value="Ribosomal_bS20"/>
</dbReference>
<dbReference type="InterPro" id="IPR036510">
    <property type="entry name" value="Ribosomal_bS20_sf"/>
</dbReference>
<dbReference type="NCBIfam" id="TIGR00029">
    <property type="entry name" value="S20"/>
    <property type="match status" value="1"/>
</dbReference>
<dbReference type="PANTHER" id="PTHR33398">
    <property type="entry name" value="30S RIBOSOMAL PROTEIN S20"/>
    <property type="match status" value="1"/>
</dbReference>
<dbReference type="PANTHER" id="PTHR33398:SF1">
    <property type="entry name" value="SMALL RIBOSOMAL SUBUNIT PROTEIN BS20C"/>
    <property type="match status" value="1"/>
</dbReference>
<dbReference type="Pfam" id="PF01649">
    <property type="entry name" value="Ribosomal_S20p"/>
    <property type="match status" value="1"/>
</dbReference>
<dbReference type="SUPFAM" id="SSF46992">
    <property type="entry name" value="Ribosomal protein S20"/>
    <property type="match status" value="1"/>
</dbReference>
<gene>
    <name evidence="1" type="primary">rps20</name>
</gene>
<proteinExistence type="inferred from homology"/>
<evidence type="ECO:0000255" key="1">
    <source>
        <dbReference type="HAMAP-Rule" id="MF_00500"/>
    </source>
</evidence>
<evidence type="ECO:0000305" key="2"/>
<sequence>MAKNLSAIKRIKTSERNRLINRKYKSVVKTLTKRCLMNIENLENSNLNDVQLSISQVYSKIDKAIKKGAFHPNTGARKKARLARIFAYAQKQQN</sequence>
<organism>
    <name type="scientific">Porphyra purpurea</name>
    <name type="common">Red seaweed</name>
    <name type="synonym">Ulva purpurea</name>
    <dbReference type="NCBI Taxonomy" id="2787"/>
    <lineage>
        <taxon>Eukaryota</taxon>
        <taxon>Rhodophyta</taxon>
        <taxon>Bangiophyceae</taxon>
        <taxon>Bangiales</taxon>
        <taxon>Bangiaceae</taxon>
        <taxon>Porphyra</taxon>
    </lineage>
</organism>